<gene>
    <name evidence="1" type="primary">pyrE</name>
    <name type="ordered locus">SeD_A4120</name>
</gene>
<accession>B5FM65</accession>
<feature type="chain" id="PRO_1000138825" description="Orotate phosphoribosyltransferase">
    <location>
        <begin position="1"/>
        <end position="213"/>
    </location>
</feature>
<feature type="binding site" description="in other chain" evidence="1">
    <location>
        <position position="26"/>
    </location>
    <ligand>
        <name>5-phospho-alpha-D-ribose 1-diphosphate</name>
        <dbReference type="ChEBI" id="CHEBI:58017"/>
        <note>ligand shared between dimeric partners</note>
    </ligand>
</feature>
<feature type="binding site" evidence="1">
    <location>
        <begin position="34"/>
        <end position="35"/>
    </location>
    <ligand>
        <name>orotate</name>
        <dbReference type="ChEBI" id="CHEBI:30839"/>
    </ligand>
</feature>
<feature type="binding site" description="in other chain" evidence="1">
    <location>
        <begin position="72"/>
        <end position="73"/>
    </location>
    <ligand>
        <name>5-phospho-alpha-D-ribose 1-diphosphate</name>
        <dbReference type="ChEBI" id="CHEBI:58017"/>
        <note>ligand shared between dimeric partners</note>
    </ligand>
</feature>
<feature type="binding site" evidence="1">
    <location>
        <position position="99"/>
    </location>
    <ligand>
        <name>5-phospho-alpha-D-ribose 1-diphosphate</name>
        <dbReference type="ChEBI" id="CHEBI:58017"/>
        <note>ligand shared between dimeric partners</note>
    </ligand>
</feature>
<feature type="binding site" description="in other chain" evidence="1">
    <location>
        <position position="100"/>
    </location>
    <ligand>
        <name>5-phospho-alpha-D-ribose 1-diphosphate</name>
        <dbReference type="ChEBI" id="CHEBI:58017"/>
        <note>ligand shared between dimeric partners</note>
    </ligand>
</feature>
<feature type="binding site" evidence="1">
    <location>
        <position position="103"/>
    </location>
    <ligand>
        <name>5-phospho-alpha-D-ribose 1-diphosphate</name>
        <dbReference type="ChEBI" id="CHEBI:58017"/>
        <note>ligand shared between dimeric partners</note>
    </ligand>
</feature>
<feature type="binding site" evidence="1">
    <location>
        <position position="105"/>
    </location>
    <ligand>
        <name>5-phospho-alpha-D-ribose 1-diphosphate</name>
        <dbReference type="ChEBI" id="CHEBI:58017"/>
        <note>ligand shared between dimeric partners</note>
    </ligand>
</feature>
<feature type="binding site" description="in other chain" evidence="1">
    <location>
        <begin position="124"/>
        <end position="132"/>
    </location>
    <ligand>
        <name>5-phospho-alpha-D-ribose 1-diphosphate</name>
        <dbReference type="ChEBI" id="CHEBI:58017"/>
        <note>ligand shared between dimeric partners</note>
    </ligand>
</feature>
<feature type="binding site" evidence="1">
    <location>
        <position position="128"/>
    </location>
    <ligand>
        <name>orotate</name>
        <dbReference type="ChEBI" id="CHEBI:30839"/>
    </ligand>
</feature>
<feature type="binding site" evidence="1">
    <location>
        <position position="156"/>
    </location>
    <ligand>
        <name>orotate</name>
        <dbReference type="ChEBI" id="CHEBI:30839"/>
    </ligand>
</feature>
<reference key="1">
    <citation type="journal article" date="2011" name="J. Bacteriol.">
        <title>Comparative genomics of 28 Salmonella enterica isolates: evidence for CRISPR-mediated adaptive sublineage evolution.</title>
        <authorList>
            <person name="Fricke W.F."/>
            <person name="Mammel M.K."/>
            <person name="McDermott P.F."/>
            <person name="Tartera C."/>
            <person name="White D.G."/>
            <person name="Leclerc J.E."/>
            <person name="Ravel J."/>
            <person name="Cebula T.A."/>
        </authorList>
    </citation>
    <scope>NUCLEOTIDE SEQUENCE [LARGE SCALE GENOMIC DNA]</scope>
    <source>
        <strain>CT_02021853</strain>
    </source>
</reference>
<protein>
    <recommendedName>
        <fullName evidence="1">Orotate phosphoribosyltransferase</fullName>
        <shortName evidence="1">OPRT</shortName>
        <shortName evidence="1">OPRTase</shortName>
        <ecNumber evidence="1">2.4.2.10</ecNumber>
    </recommendedName>
</protein>
<organism>
    <name type="scientific">Salmonella dublin (strain CT_02021853)</name>
    <dbReference type="NCBI Taxonomy" id="439851"/>
    <lineage>
        <taxon>Bacteria</taxon>
        <taxon>Pseudomonadati</taxon>
        <taxon>Pseudomonadota</taxon>
        <taxon>Gammaproteobacteria</taxon>
        <taxon>Enterobacterales</taxon>
        <taxon>Enterobacteriaceae</taxon>
        <taxon>Salmonella</taxon>
    </lineage>
</organism>
<evidence type="ECO:0000255" key="1">
    <source>
        <dbReference type="HAMAP-Rule" id="MF_01208"/>
    </source>
</evidence>
<comment type="function">
    <text evidence="1">Catalyzes the transfer of a ribosyl phosphate group from 5-phosphoribose 1-diphosphate to orotate, leading to the formation of orotidine monophosphate (OMP).</text>
</comment>
<comment type="catalytic activity">
    <reaction evidence="1">
        <text>orotidine 5'-phosphate + diphosphate = orotate + 5-phospho-alpha-D-ribose 1-diphosphate</text>
        <dbReference type="Rhea" id="RHEA:10380"/>
        <dbReference type="ChEBI" id="CHEBI:30839"/>
        <dbReference type="ChEBI" id="CHEBI:33019"/>
        <dbReference type="ChEBI" id="CHEBI:57538"/>
        <dbReference type="ChEBI" id="CHEBI:58017"/>
        <dbReference type="EC" id="2.4.2.10"/>
    </reaction>
</comment>
<comment type="cofactor">
    <cofactor evidence="1">
        <name>Mg(2+)</name>
        <dbReference type="ChEBI" id="CHEBI:18420"/>
    </cofactor>
</comment>
<comment type="pathway">
    <text evidence="1">Pyrimidine metabolism; UMP biosynthesis via de novo pathway; UMP from orotate: step 1/2.</text>
</comment>
<comment type="subunit">
    <text evidence="1">Homodimer.</text>
</comment>
<comment type="similarity">
    <text evidence="1">Belongs to the purine/pyrimidine phosphoribosyltransferase family. PyrE subfamily.</text>
</comment>
<name>PYRE_SALDC</name>
<dbReference type="EC" id="2.4.2.10" evidence="1"/>
<dbReference type="EMBL" id="CP001144">
    <property type="protein sequence ID" value="ACH74648.1"/>
    <property type="molecule type" value="Genomic_DNA"/>
</dbReference>
<dbReference type="RefSeq" id="WP_000806167.1">
    <property type="nucleotide sequence ID" value="NC_011205.1"/>
</dbReference>
<dbReference type="SMR" id="B5FM65"/>
<dbReference type="KEGG" id="sed:SeD_A4120"/>
<dbReference type="HOGENOM" id="CLU_074878_0_1_6"/>
<dbReference type="UniPathway" id="UPA00070">
    <property type="reaction ID" value="UER00119"/>
</dbReference>
<dbReference type="Proteomes" id="UP000008322">
    <property type="component" value="Chromosome"/>
</dbReference>
<dbReference type="GO" id="GO:0005737">
    <property type="term" value="C:cytoplasm"/>
    <property type="evidence" value="ECO:0007669"/>
    <property type="project" value="TreeGrafter"/>
</dbReference>
<dbReference type="GO" id="GO:0000287">
    <property type="term" value="F:magnesium ion binding"/>
    <property type="evidence" value="ECO:0007669"/>
    <property type="project" value="UniProtKB-UniRule"/>
</dbReference>
<dbReference type="GO" id="GO:0004588">
    <property type="term" value="F:orotate phosphoribosyltransferase activity"/>
    <property type="evidence" value="ECO:0007669"/>
    <property type="project" value="UniProtKB-UniRule"/>
</dbReference>
<dbReference type="GO" id="GO:0006207">
    <property type="term" value="P:'de novo' pyrimidine nucleobase biosynthetic process"/>
    <property type="evidence" value="ECO:0007669"/>
    <property type="project" value="TreeGrafter"/>
</dbReference>
<dbReference type="GO" id="GO:0044205">
    <property type="term" value="P:'de novo' UMP biosynthetic process"/>
    <property type="evidence" value="ECO:0007669"/>
    <property type="project" value="UniProtKB-UniRule"/>
</dbReference>
<dbReference type="GO" id="GO:0046132">
    <property type="term" value="P:pyrimidine ribonucleoside biosynthetic process"/>
    <property type="evidence" value="ECO:0007669"/>
    <property type="project" value="TreeGrafter"/>
</dbReference>
<dbReference type="CDD" id="cd06223">
    <property type="entry name" value="PRTases_typeI"/>
    <property type="match status" value="1"/>
</dbReference>
<dbReference type="FunFam" id="3.40.50.2020:FF:000008">
    <property type="entry name" value="Orotate phosphoribosyltransferase"/>
    <property type="match status" value="1"/>
</dbReference>
<dbReference type="Gene3D" id="3.40.50.2020">
    <property type="match status" value="1"/>
</dbReference>
<dbReference type="HAMAP" id="MF_01208">
    <property type="entry name" value="PyrE"/>
    <property type="match status" value="1"/>
</dbReference>
<dbReference type="InterPro" id="IPR023031">
    <property type="entry name" value="OPRT"/>
</dbReference>
<dbReference type="InterPro" id="IPR004467">
    <property type="entry name" value="Or_phspho_trans_dom"/>
</dbReference>
<dbReference type="InterPro" id="IPR000836">
    <property type="entry name" value="PRibTrfase_dom"/>
</dbReference>
<dbReference type="InterPro" id="IPR029057">
    <property type="entry name" value="PRTase-like"/>
</dbReference>
<dbReference type="NCBIfam" id="TIGR00336">
    <property type="entry name" value="pyrE"/>
    <property type="match status" value="1"/>
</dbReference>
<dbReference type="PANTHER" id="PTHR46683">
    <property type="entry name" value="OROTATE PHOSPHORIBOSYLTRANSFERASE 1-RELATED"/>
    <property type="match status" value="1"/>
</dbReference>
<dbReference type="PANTHER" id="PTHR46683:SF1">
    <property type="entry name" value="OROTATE PHOSPHORIBOSYLTRANSFERASE 1-RELATED"/>
    <property type="match status" value="1"/>
</dbReference>
<dbReference type="Pfam" id="PF00156">
    <property type="entry name" value="Pribosyltran"/>
    <property type="match status" value="1"/>
</dbReference>
<dbReference type="SUPFAM" id="SSF53271">
    <property type="entry name" value="PRTase-like"/>
    <property type="match status" value="1"/>
</dbReference>
<dbReference type="PROSITE" id="PS00103">
    <property type="entry name" value="PUR_PYR_PR_TRANSFER"/>
    <property type="match status" value="1"/>
</dbReference>
<keyword id="KW-0328">Glycosyltransferase</keyword>
<keyword id="KW-0460">Magnesium</keyword>
<keyword id="KW-0665">Pyrimidine biosynthesis</keyword>
<keyword id="KW-0808">Transferase</keyword>
<sequence length="213" mass="23562">MKPYQRQFIEFALNKQVLKFGEFTLKSGRKSPYFFNAGLFNTGRDLALLGRFYAEALVDSGIEFDLLFGPAYKGIPIATTTAVALAEHHDKDLPYCFNRKEAKDHGEGGSLVGSALQGRVMLVDDVITAGTAIRESMEIIQAHGATLAGVLISLDRQERGRGEISAIQEVERDYGCKVISIITLKDLIAYLEEKPDMAEHLAAVRAYREEFGV</sequence>
<proteinExistence type="inferred from homology"/>